<feature type="chain" id="PRO_0000186981" description="Uncharacterized protein aq_aa04">
    <location>
        <begin position="1"/>
        <end position="174"/>
    </location>
</feature>
<name>YZ04_AQUAE</name>
<dbReference type="EMBL" id="AE000667">
    <property type="protein sequence ID" value="AAC07952.1"/>
    <property type="molecule type" value="Genomic_DNA"/>
</dbReference>
<dbReference type="RefSeq" id="NP_046400.1">
    <property type="nucleotide sequence ID" value="NC_001880.1"/>
</dbReference>
<dbReference type="RefSeq" id="WP_010890546.1">
    <property type="nucleotide sequence ID" value="NC_001880.1"/>
</dbReference>
<dbReference type="SMR" id="O66400"/>
<dbReference type="EnsemblBacteria" id="AAC07952">
    <property type="protein sequence ID" value="AAC07952"/>
    <property type="gene ID" value="aq_aa04"/>
</dbReference>
<dbReference type="KEGG" id="aae:aq_aa04"/>
<dbReference type="eggNOG" id="COG0675">
    <property type="taxonomic scope" value="Bacteria"/>
</dbReference>
<dbReference type="HOGENOM" id="CLU_1536938_0_0_0"/>
<dbReference type="InParanoid" id="O66400"/>
<dbReference type="Proteomes" id="UP000000798">
    <property type="component" value="Plasmid ece1"/>
</dbReference>
<protein>
    <recommendedName>
        <fullName>Uncharacterized protein aq_aa04</fullName>
    </recommendedName>
</protein>
<geneLocation type="plasmid">
    <name>ece1</name>
</geneLocation>
<proteinExistence type="predicted"/>
<keyword id="KW-0614">Plasmid</keyword>
<keyword id="KW-1185">Reference proteome</keyword>
<gene>
    <name type="ordered locus">aq_aa04</name>
</gene>
<organism>
    <name type="scientific">Aquifex aeolicus (strain VF5)</name>
    <dbReference type="NCBI Taxonomy" id="224324"/>
    <lineage>
        <taxon>Bacteria</taxon>
        <taxon>Pseudomonadati</taxon>
        <taxon>Aquificota</taxon>
        <taxon>Aquificia</taxon>
        <taxon>Aquificales</taxon>
        <taxon>Aquificaceae</taxon>
        <taxon>Aquifex</taxon>
    </lineage>
</organism>
<reference key="1">
    <citation type="journal article" date="1998" name="Nature">
        <title>The complete genome of the hyperthermophilic bacterium Aquifex aeolicus.</title>
        <authorList>
            <person name="Deckert G."/>
            <person name="Warren P.V."/>
            <person name="Gaasterland T."/>
            <person name="Young W.G."/>
            <person name="Lenox A.L."/>
            <person name="Graham D.E."/>
            <person name="Overbeek R."/>
            <person name="Snead M.A."/>
            <person name="Keller M."/>
            <person name="Aujay M."/>
            <person name="Huber R."/>
            <person name="Feldman R.A."/>
            <person name="Short J.M."/>
            <person name="Olsen G.J."/>
            <person name="Swanson R.V."/>
        </authorList>
    </citation>
    <scope>NUCLEOTIDE SEQUENCE [LARGE SCALE GENOMIC DNA]</scope>
    <source>
        <strain>VF5</strain>
    </source>
</reference>
<accession>O66400</accession>
<sequence>MKVIKKTVLLKVYEPNKGKKECLDRVIDLYAKTLDFYLDVIKKAGIYRIVALARKKKERKSGRKSNYALNLLEKLTVPTQAHPNPLYPIPFSVRVDIRRSAINQAIGMVSSYVSNLKNWYEEGKELGHSKPSYPNPKSYSPQLYSTLVELDDLLVRENKEFHFVRIKVLNEKER</sequence>